<feature type="chain" id="PRO_1000071720" description="RNA 3'-terminal phosphate cyclase">
    <location>
        <begin position="1"/>
        <end position="334"/>
    </location>
</feature>
<feature type="active site" description="Tele-AMP-histidine intermediate" evidence="1">
    <location>
        <position position="303"/>
    </location>
</feature>
<feature type="binding site" evidence="1">
    <location>
        <begin position="279"/>
        <end position="282"/>
    </location>
    <ligand>
        <name>ATP</name>
        <dbReference type="ChEBI" id="CHEBI:30616"/>
    </ligand>
</feature>
<evidence type="ECO:0000255" key="1">
    <source>
        <dbReference type="HAMAP-Rule" id="MF_00200"/>
    </source>
</evidence>
<proteinExistence type="inferred from homology"/>
<name>RTCA_METS5</name>
<reference key="1">
    <citation type="journal article" date="2008" name="Appl. Environ. Microbiol.">
        <title>The genome sequence of the metal-mobilizing, extremely thermoacidophilic archaeon Metallosphaera sedula provides insights into bioleaching-associated metabolism.</title>
        <authorList>
            <person name="Auernik K.S."/>
            <person name="Maezato Y."/>
            <person name="Blum P.H."/>
            <person name="Kelly R.M."/>
        </authorList>
    </citation>
    <scope>NUCLEOTIDE SEQUENCE [LARGE SCALE GENOMIC DNA]</scope>
    <source>
        <strain>ATCC 51363 / DSM 5348 / JCM 9185 / NBRC 15509 / TH2</strain>
    </source>
</reference>
<keyword id="KW-0067">ATP-binding</keyword>
<keyword id="KW-0963">Cytoplasm</keyword>
<keyword id="KW-0436">Ligase</keyword>
<keyword id="KW-0547">Nucleotide-binding</keyword>
<keyword id="KW-1185">Reference proteome</keyword>
<dbReference type="EC" id="6.5.1.4" evidence="1"/>
<dbReference type="EMBL" id="CP000682">
    <property type="protein sequence ID" value="ABP94775.1"/>
    <property type="molecule type" value="Genomic_DNA"/>
</dbReference>
<dbReference type="RefSeq" id="WP_012020562.1">
    <property type="nucleotide sequence ID" value="NC_009440.1"/>
</dbReference>
<dbReference type="SMR" id="A4YEC3"/>
<dbReference type="STRING" id="399549.Msed_0600"/>
<dbReference type="GeneID" id="91755051"/>
<dbReference type="KEGG" id="mse:Msed_0600"/>
<dbReference type="eggNOG" id="arCOG04125">
    <property type="taxonomic scope" value="Archaea"/>
</dbReference>
<dbReference type="HOGENOM" id="CLU_027882_0_0_2"/>
<dbReference type="Proteomes" id="UP000000242">
    <property type="component" value="Chromosome"/>
</dbReference>
<dbReference type="GO" id="GO:0005737">
    <property type="term" value="C:cytoplasm"/>
    <property type="evidence" value="ECO:0007669"/>
    <property type="project" value="UniProtKB-SubCell"/>
</dbReference>
<dbReference type="GO" id="GO:0005524">
    <property type="term" value="F:ATP binding"/>
    <property type="evidence" value="ECO:0007669"/>
    <property type="project" value="UniProtKB-KW"/>
</dbReference>
<dbReference type="GO" id="GO:0003963">
    <property type="term" value="F:RNA-3'-phosphate cyclase activity"/>
    <property type="evidence" value="ECO:0007669"/>
    <property type="project" value="UniProtKB-UniRule"/>
</dbReference>
<dbReference type="GO" id="GO:0006396">
    <property type="term" value="P:RNA processing"/>
    <property type="evidence" value="ECO:0007669"/>
    <property type="project" value="InterPro"/>
</dbReference>
<dbReference type="Gene3D" id="3.65.10.20">
    <property type="entry name" value="RNA 3'-terminal phosphate cyclase domain"/>
    <property type="match status" value="1"/>
</dbReference>
<dbReference type="Gene3D" id="3.30.360.20">
    <property type="entry name" value="RNA 3'-terminal phosphate cyclase, insert domain"/>
    <property type="match status" value="1"/>
</dbReference>
<dbReference type="HAMAP" id="MF_00200">
    <property type="entry name" value="RTC"/>
    <property type="match status" value="1"/>
</dbReference>
<dbReference type="InterPro" id="IPR013791">
    <property type="entry name" value="RNA3'-term_phos_cycl_insert"/>
</dbReference>
<dbReference type="InterPro" id="IPR023797">
    <property type="entry name" value="RNA3'_phos_cyclase_dom"/>
</dbReference>
<dbReference type="InterPro" id="IPR037136">
    <property type="entry name" value="RNA3'_phos_cyclase_dom_sf"/>
</dbReference>
<dbReference type="InterPro" id="IPR000228">
    <property type="entry name" value="RNA3'_term_phos_cyc"/>
</dbReference>
<dbReference type="InterPro" id="IPR017770">
    <property type="entry name" value="RNA3'_term_phos_cyc_type_1"/>
</dbReference>
<dbReference type="InterPro" id="IPR020719">
    <property type="entry name" value="RNA3'_term_phos_cycl-like_CS"/>
</dbReference>
<dbReference type="InterPro" id="IPR013792">
    <property type="entry name" value="RNA3'P_cycl/enolpyr_Trfase_a/b"/>
</dbReference>
<dbReference type="InterPro" id="IPR036553">
    <property type="entry name" value="RPTC_insert"/>
</dbReference>
<dbReference type="NCBIfam" id="TIGR03399">
    <property type="entry name" value="RNA_3prim_cycl"/>
    <property type="match status" value="1"/>
</dbReference>
<dbReference type="PANTHER" id="PTHR11096">
    <property type="entry name" value="RNA 3' TERMINAL PHOSPHATE CYCLASE"/>
    <property type="match status" value="1"/>
</dbReference>
<dbReference type="PANTHER" id="PTHR11096:SF0">
    <property type="entry name" value="RNA 3'-TERMINAL PHOSPHATE CYCLASE"/>
    <property type="match status" value="1"/>
</dbReference>
<dbReference type="Pfam" id="PF01137">
    <property type="entry name" value="RTC"/>
    <property type="match status" value="1"/>
</dbReference>
<dbReference type="Pfam" id="PF05189">
    <property type="entry name" value="RTC_insert"/>
    <property type="match status" value="1"/>
</dbReference>
<dbReference type="PIRSF" id="PIRSF005378">
    <property type="entry name" value="RNA3'_term_phos_cycl_euk"/>
    <property type="match status" value="1"/>
</dbReference>
<dbReference type="SUPFAM" id="SSF55205">
    <property type="entry name" value="EPT/RTPC-like"/>
    <property type="match status" value="1"/>
</dbReference>
<dbReference type="SUPFAM" id="SSF52913">
    <property type="entry name" value="RNA 3'-terminal phosphate cyclase, RPTC, insert domain"/>
    <property type="match status" value="1"/>
</dbReference>
<dbReference type="PROSITE" id="PS01287">
    <property type="entry name" value="RTC"/>
    <property type="match status" value="1"/>
</dbReference>
<gene>
    <name evidence="1" type="primary">rtcA</name>
    <name type="ordered locus">Msed_0600</name>
</gene>
<organism>
    <name type="scientific">Metallosphaera sedula (strain ATCC 51363 / DSM 5348 / JCM 9185 / NBRC 15509 / TH2)</name>
    <dbReference type="NCBI Taxonomy" id="399549"/>
    <lineage>
        <taxon>Archaea</taxon>
        <taxon>Thermoproteota</taxon>
        <taxon>Thermoprotei</taxon>
        <taxon>Sulfolobales</taxon>
        <taxon>Sulfolobaceae</taxon>
        <taxon>Metallosphaera</taxon>
    </lineage>
</organism>
<comment type="function">
    <text evidence="1">Catalyzes the conversion of 3'-phosphate to a 2',3'-cyclic phosphodiester at the end of RNA. The mechanism of action of the enzyme occurs in 3 steps: (A) adenylation of the enzyme by ATP; (B) transfer of adenylate to an RNA-N3'P to produce RNA-N3'PP5'A; (C) and attack of the adjacent 2'-hydroxyl on the 3'-phosphorus in the diester linkage to produce the cyclic end product. The biological role of this enzyme is unknown but it is likely to function in some aspects of cellular RNA processing.</text>
</comment>
<comment type="catalytic activity">
    <reaction evidence="1">
        <text>a 3'-end 3'-phospho-ribonucleotide-RNA + ATP = a 3'-end 2',3'-cyclophospho-ribonucleotide-RNA + AMP + diphosphate</text>
        <dbReference type="Rhea" id="RHEA:23976"/>
        <dbReference type="Rhea" id="RHEA-COMP:10463"/>
        <dbReference type="Rhea" id="RHEA-COMP:10464"/>
        <dbReference type="ChEBI" id="CHEBI:30616"/>
        <dbReference type="ChEBI" id="CHEBI:33019"/>
        <dbReference type="ChEBI" id="CHEBI:83062"/>
        <dbReference type="ChEBI" id="CHEBI:83064"/>
        <dbReference type="ChEBI" id="CHEBI:456215"/>
        <dbReference type="EC" id="6.5.1.4"/>
    </reaction>
</comment>
<comment type="subcellular location">
    <subcellularLocation>
        <location evidence="1">Cytoplasm</location>
    </subcellularLocation>
</comment>
<comment type="similarity">
    <text evidence="1">Belongs to the RNA 3'-terminal cyclase family. Type 1 subfamily.</text>
</comment>
<sequence length="334" mass="36271">MLEIDGSFGEGGGQILRSSLALSSLTGKGFRIRGIRAKRKNPGLQPQHLTSVRVMKMLTNARVSGDYLGSTELEFEPGEVVEGSFTVDVGTAGSVSLIAMTAIPLMINRRISLRIRGGTDVPLSPPVDYMRLVFIPLLEKMGITGKIEVKRRGHYPEGGGEVEVYGFRGEPRDLVLDSFGELREITGVSHVTSLPAHIAKRQIQGVMEVLREFNVPVKVEEEVSNEGSRGTGIVLSAHGLSIMGASSLGEKGITAENVGRKAGTELLKELKTGAAVDSHMGDMLVTFSAFANLEYTGSLLTQHTETNIEVIRKFLEIDVKIEGRSPFKLRLKRK</sequence>
<protein>
    <recommendedName>
        <fullName evidence="1">RNA 3'-terminal phosphate cyclase</fullName>
        <shortName evidence="1">RNA cyclase</shortName>
        <shortName evidence="1">RNA-3'-phosphate cyclase</shortName>
        <ecNumber evidence="1">6.5.1.4</ecNumber>
    </recommendedName>
</protein>
<accession>A4YEC3</accession>